<accession>Q9MUJ5</accession>
<accession>A2T333</accession>
<organism>
    <name type="scientific">Angiopteris evecta</name>
    <name type="common">Mule's foot fern</name>
    <name type="synonym">Polypodium evectum</name>
    <dbReference type="NCBI Taxonomy" id="13825"/>
    <lineage>
        <taxon>Eukaryota</taxon>
        <taxon>Viridiplantae</taxon>
        <taxon>Streptophyta</taxon>
        <taxon>Embryophyta</taxon>
        <taxon>Tracheophyta</taxon>
        <taxon>Polypodiopsida</taxon>
        <taxon>Marattiidae</taxon>
        <taxon>Marattiales</taxon>
        <taxon>Marattiaceae</taxon>
        <taxon>Angiopteris</taxon>
    </lineage>
</organism>
<feature type="chain" id="PRO_0000088531" description="Photosystem I P700 chlorophyll a apoprotein A1">
    <location>
        <begin position="1"/>
        <end position="750"/>
    </location>
</feature>
<feature type="transmembrane region" description="Helical; Name=I" evidence="1">
    <location>
        <begin position="70"/>
        <end position="93"/>
    </location>
</feature>
<feature type="transmembrane region" description="Helical; Name=II" evidence="1">
    <location>
        <begin position="156"/>
        <end position="179"/>
    </location>
</feature>
<feature type="transmembrane region" description="Helical; Name=III" evidence="1">
    <location>
        <begin position="195"/>
        <end position="219"/>
    </location>
</feature>
<feature type="transmembrane region" description="Helical; Name=IV" evidence="1">
    <location>
        <begin position="291"/>
        <end position="309"/>
    </location>
</feature>
<feature type="transmembrane region" description="Helical; Name=V" evidence="1">
    <location>
        <begin position="346"/>
        <end position="369"/>
    </location>
</feature>
<feature type="transmembrane region" description="Helical; Name=VI" evidence="1">
    <location>
        <begin position="385"/>
        <end position="411"/>
    </location>
</feature>
<feature type="transmembrane region" description="Helical; Name=VII" evidence="1">
    <location>
        <begin position="433"/>
        <end position="455"/>
    </location>
</feature>
<feature type="transmembrane region" description="Helical; Name=VIII" evidence="1">
    <location>
        <begin position="531"/>
        <end position="549"/>
    </location>
</feature>
<feature type="transmembrane region" description="Helical; Name=IX" evidence="1">
    <location>
        <begin position="589"/>
        <end position="610"/>
    </location>
</feature>
<feature type="transmembrane region" description="Helical; Name=X" evidence="1">
    <location>
        <begin position="664"/>
        <end position="686"/>
    </location>
</feature>
<feature type="transmembrane region" description="Helical; Name=XI" evidence="1">
    <location>
        <begin position="724"/>
        <end position="744"/>
    </location>
</feature>
<feature type="binding site" evidence="1">
    <location>
        <position position="573"/>
    </location>
    <ligand>
        <name>[4Fe-4S] cluster</name>
        <dbReference type="ChEBI" id="CHEBI:49883"/>
        <note>ligand shared between dimeric partners</note>
    </ligand>
</feature>
<feature type="binding site" evidence="1">
    <location>
        <position position="582"/>
    </location>
    <ligand>
        <name>[4Fe-4S] cluster</name>
        <dbReference type="ChEBI" id="CHEBI:49883"/>
        <note>ligand shared between dimeric partners</note>
    </ligand>
</feature>
<feature type="binding site" description="axial binding residue" evidence="1">
    <location>
        <position position="675"/>
    </location>
    <ligand>
        <name>chlorophyll a'</name>
        <dbReference type="ChEBI" id="CHEBI:189419"/>
        <label>A1</label>
    </ligand>
    <ligandPart>
        <name>Mg</name>
        <dbReference type="ChEBI" id="CHEBI:25107"/>
    </ligandPart>
</feature>
<feature type="binding site" description="axial binding residue" evidence="1">
    <location>
        <position position="683"/>
    </location>
    <ligand>
        <name>chlorophyll a</name>
        <dbReference type="ChEBI" id="CHEBI:58416"/>
        <label>A3</label>
    </ligand>
    <ligandPart>
        <name>Mg</name>
        <dbReference type="ChEBI" id="CHEBI:25107"/>
    </ligandPart>
</feature>
<feature type="binding site" evidence="1">
    <location>
        <position position="691"/>
    </location>
    <ligand>
        <name>chlorophyll a</name>
        <dbReference type="ChEBI" id="CHEBI:58416"/>
        <label>A3</label>
    </ligand>
</feature>
<feature type="binding site" evidence="1">
    <location>
        <position position="692"/>
    </location>
    <ligand>
        <name>phylloquinone</name>
        <dbReference type="ChEBI" id="CHEBI:18067"/>
        <label>A</label>
    </ligand>
</feature>
<feature type="sequence conflict" description="In Ref. 2; AAF29821." evidence="2" ref="2">
    <original>Q</original>
    <variation>K</variation>
    <location>
        <position position="28"/>
    </location>
</feature>
<feature type="sequence conflict" description="In Ref. 2; AAF29821." evidence="2" ref="2">
    <original>D</original>
    <variation>E</variation>
    <location>
        <position position="65"/>
    </location>
</feature>
<feature type="sequence conflict" description="In Ref. 2; AAF29821." evidence="2" ref="2">
    <original>H</original>
    <variation>R</variation>
    <location>
        <position position="107"/>
    </location>
</feature>
<feature type="sequence conflict" description="In Ref. 2; AAF29821." evidence="2" ref="2">
    <original>Q</original>
    <variation>R</variation>
    <location>
        <position position="133"/>
    </location>
</feature>
<feature type="sequence conflict" description="In Ref. 2; AAF29821." evidence="2" ref="2">
    <original>L</original>
    <variation>I</variation>
    <location>
        <position position="144"/>
    </location>
</feature>
<feature type="sequence conflict" description="In Ref. 2; AAF29821." evidence="2" ref="2">
    <original>N</original>
    <variation>S</variation>
    <location>
        <position position="152"/>
    </location>
</feature>
<feature type="sequence conflict" description="In Ref. 2; AAF29821." evidence="2" ref="2">
    <original>G</original>
    <variation>A</variation>
    <location>
        <position position="168"/>
    </location>
</feature>
<feature type="sequence conflict" description="In Ref. 2; AAF29821." evidence="2" ref="2">
    <original>R</original>
    <variation>W</variation>
    <location>
        <position position="187"/>
    </location>
</feature>
<feature type="sequence conflict" description="In Ref. 2; AAF29821." evidence="2" ref="2">
    <original>G</original>
    <variation>S</variation>
    <location>
        <position position="209"/>
    </location>
</feature>
<feature type="sequence conflict" description="In Ref. 2; AAF29821." evidence="2" ref="2">
    <original>L</original>
    <variation>S</variation>
    <location>
        <position position="242"/>
    </location>
</feature>
<feature type="sequence conflict" description="In Ref. 2; AAF29821." evidence="2" ref="2">
    <original>L</original>
    <variation>V</variation>
    <location>
        <position position="247"/>
    </location>
</feature>
<feature type="sequence conflict" description="In Ref. 2; AAF29821." evidence="2" ref="2">
    <original>TS</original>
    <variation>AL</variation>
    <location>
        <begin position="263"/>
        <end position="264"/>
    </location>
</feature>
<feature type="sequence conflict" description="In Ref. 2; AAF29821." evidence="2" ref="2">
    <original>AD</original>
    <variation>SE</variation>
    <location>
        <begin position="270"/>
        <end position="271"/>
    </location>
</feature>
<feature type="sequence conflict" description="In Ref. 2; AAF29821." evidence="2" ref="2">
    <original>GV</original>
    <variation>AI</variation>
    <location>
        <begin position="299"/>
        <end position="300"/>
    </location>
</feature>
<feature type="sequence conflict" description="In Ref. 2; AAF29821." evidence="2" ref="2">
    <original>V</original>
    <variation>I</variation>
    <location>
        <position position="304"/>
    </location>
</feature>
<feature type="sequence conflict" description="In Ref. 2; AAF29821." evidence="2" ref="2">
    <original>I</original>
    <variation>L</variation>
    <location>
        <position position="319"/>
    </location>
</feature>
<feature type="sequence conflict" description="In Ref. 2; AAF29821." evidence="2" ref="2">
    <original>L</original>
    <variation>I</variation>
    <location>
        <position position="338"/>
    </location>
</feature>
<feature type="sequence conflict" description="In Ref. 2; AAF29821." evidence="2" ref="2">
    <original>I</original>
    <variation>V</variation>
    <location>
        <position position="363"/>
    </location>
</feature>
<feature type="sequence conflict" description="In Ref. 2; AAF29821." evidence="2" ref="2">
    <original>T</original>
    <variation>I</variation>
    <location>
        <position position="379"/>
    </location>
</feature>
<feature type="sequence conflict" description="In Ref. 2; AAF29821." evidence="2" ref="2">
    <original>G</original>
    <variation>R</variation>
    <location>
        <position position="395"/>
    </location>
</feature>
<feature type="sequence conflict" description="In Ref. 2; AAF29821." evidence="2" ref="2">
    <original>V</original>
    <variation>I</variation>
    <location>
        <position position="399"/>
    </location>
</feature>
<feature type="sequence conflict" description="In Ref. 2; AAF29821." evidence="2" ref="2">
    <original>T</original>
    <variation>I</variation>
    <location>
        <position position="418"/>
    </location>
</feature>
<feature type="sequence conflict" description="In Ref. 2; AAF29821." evidence="2" ref="2">
    <original>I</original>
    <variation>V</variation>
    <location>
        <position position="435"/>
    </location>
</feature>
<feature type="sequence conflict" description="In Ref. 2; AAF29821." evidence="2" ref="2">
    <original>V</original>
    <variation>A</variation>
    <location>
        <position position="441"/>
    </location>
</feature>
<feature type="sequence conflict" description="In Ref. 2; AAF29821." evidence="2" ref="2">
    <original>F</original>
    <variation>S</variation>
    <location>
        <position position="490"/>
    </location>
</feature>
<feature type="sequence conflict" description="In Ref. 2; AAF29821." evidence="2" ref="2">
    <original>L</original>
    <variation>S</variation>
    <location>
        <position position="494"/>
    </location>
</feature>
<feature type="sequence conflict" description="In Ref. 2; AAF29821." evidence="2" ref="2">
    <original>NAT</original>
    <variation>GAA</variation>
    <location>
        <begin position="498"/>
        <end position="500"/>
    </location>
</feature>
<feature type="sequence conflict" description="In Ref. 2; AAF29821." evidence="2" ref="2">
    <original>I</original>
    <variation>L</variation>
    <location>
        <position position="513"/>
    </location>
</feature>
<feature type="sequence conflict" description="In Ref. 2; AAF29821." evidence="2" ref="2">
    <original>S</original>
    <variation>A</variation>
    <location>
        <position position="600"/>
    </location>
</feature>
<feature type="sequence conflict" description="In Ref. 2; AAF29821." evidence="2" ref="2">
    <original>I</original>
    <variation>V</variation>
    <location>
        <position position="603"/>
    </location>
</feature>
<feature type="sequence conflict" description="In Ref. 2; AAF29821." evidence="2" ref="2">
    <original>Q</original>
    <variation>R</variation>
    <location>
        <position position="623"/>
    </location>
</feature>
<feature type="sequence conflict" description="In Ref. 2; AAF29821." evidence="2" ref="2">
    <original>S</original>
    <variation>T</variation>
    <location>
        <position position="627"/>
    </location>
</feature>
<feature type="sequence conflict" description="In Ref. 2; AAF29821." evidence="2" ref="2">
    <original>AT</original>
    <variation>SI</variation>
    <location>
        <begin position="638"/>
        <end position="639"/>
    </location>
</feature>
<feature type="sequence conflict" description="In Ref. 2; AAF29821." evidence="2" ref="2">
    <original>L</original>
    <variation>F</variation>
    <location>
        <position position="670"/>
    </location>
</feature>
<keyword id="KW-0004">4Fe-4S</keyword>
<keyword id="KW-0148">Chlorophyll</keyword>
<keyword id="KW-0150">Chloroplast</keyword>
<keyword id="KW-0157">Chromophore</keyword>
<keyword id="KW-0249">Electron transport</keyword>
<keyword id="KW-0408">Iron</keyword>
<keyword id="KW-0411">Iron-sulfur</keyword>
<keyword id="KW-0460">Magnesium</keyword>
<keyword id="KW-0472">Membrane</keyword>
<keyword id="KW-0479">Metal-binding</keyword>
<keyword id="KW-0560">Oxidoreductase</keyword>
<keyword id="KW-0602">Photosynthesis</keyword>
<keyword id="KW-0603">Photosystem I</keyword>
<keyword id="KW-0934">Plastid</keyword>
<keyword id="KW-0793">Thylakoid</keyword>
<keyword id="KW-0812">Transmembrane</keyword>
<keyword id="KW-1133">Transmembrane helix</keyword>
<keyword id="KW-0813">Transport</keyword>
<geneLocation type="chloroplast"/>
<reference key="1">
    <citation type="journal article" date="2007" name="Am. Fern J.">
        <title>The complete plastid genome sequence of Angiopteris evecta (G. Forst.) Hoffm. (Marattiaceae).</title>
        <authorList>
            <person name="Roper J.M."/>
            <person name="Hansen S.K."/>
            <person name="Wolf P.G."/>
            <person name="Karol K.G."/>
            <person name="Mandoli D.F."/>
            <person name="Everett K.D.E."/>
            <person name="Kuehl J.V."/>
            <person name="Boore J.L."/>
        </authorList>
    </citation>
    <scope>NUCLEOTIDE SEQUENCE [LARGE SCALE GENOMIC DNA]</scope>
</reference>
<reference key="2">
    <citation type="journal article" date="2000" name="Mol. Biol. Evol.">
        <title>Error, bias, and long-branch attraction in data for two chloroplast photosystem genes in seed plants.</title>
        <authorList>
            <person name="Sanderson M.J."/>
            <person name="Wojciechowski M.F."/>
            <person name="Hu J.-M."/>
            <person name="Sher Khan T."/>
            <person name="Brady S.G."/>
        </authorList>
    </citation>
    <scope>NUCLEOTIDE SEQUENCE [GENOMIC DNA] OF 10-730</scope>
</reference>
<dbReference type="EC" id="1.97.1.12" evidence="1"/>
<dbReference type="EMBL" id="DQ821119">
    <property type="protein sequence ID" value="ABG79600.1"/>
    <property type="molecule type" value="Genomic_DNA"/>
</dbReference>
<dbReference type="EMBL" id="AF180020">
    <property type="protein sequence ID" value="AAF29821.1"/>
    <property type="molecule type" value="Genomic_DNA"/>
</dbReference>
<dbReference type="RefSeq" id="YP_001023701.1">
    <property type="nucleotide sequence ID" value="NC_008829.1"/>
</dbReference>
<dbReference type="SMR" id="Q9MUJ5"/>
<dbReference type="GeneID" id="4788250"/>
<dbReference type="GO" id="GO:0009535">
    <property type="term" value="C:chloroplast thylakoid membrane"/>
    <property type="evidence" value="ECO:0007669"/>
    <property type="project" value="UniProtKB-SubCell"/>
</dbReference>
<dbReference type="GO" id="GO:0009522">
    <property type="term" value="C:photosystem I"/>
    <property type="evidence" value="ECO:0007669"/>
    <property type="project" value="UniProtKB-KW"/>
</dbReference>
<dbReference type="GO" id="GO:0051539">
    <property type="term" value="F:4 iron, 4 sulfur cluster binding"/>
    <property type="evidence" value="ECO:0007669"/>
    <property type="project" value="UniProtKB-KW"/>
</dbReference>
<dbReference type="GO" id="GO:0016168">
    <property type="term" value="F:chlorophyll binding"/>
    <property type="evidence" value="ECO:0007669"/>
    <property type="project" value="UniProtKB-KW"/>
</dbReference>
<dbReference type="GO" id="GO:0009055">
    <property type="term" value="F:electron transfer activity"/>
    <property type="evidence" value="ECO:0007669"/>
    <property type="project" value="UniProtKB-UniRule"/>
</dbReference>
<dbReference type="GO" id="GO:0000287">
    <property type="term" value="F:magnesium ion binding"/>
    <property type="evidence" value="ECO:0007669"/>
    <property type="project" value="UniProtKB-UniRule"/>
</dbReference>
<dbReference type="GO" id="GO:0016491">
    <property type="term" value="F:oxidoreductase activity"/>
    <property type="evidence" value="ECO:0007669"/>
    <property type="project" value="UniProtKB-KW"/>
</dbReference>
<dbReference type="GO" id="GO:0015979">
    <property type="term" value="P:photosynthesis"/>
    <property type="evidence" value="ECO:0007669"/>
    <property type="project" value="UniProtKB-UniRule"/>
</dbReference>
<dbReference type="FunFam" id="1.20.1130.10:FF:000001">
    <property type="entry name" value="Photosystem I P700 chlorophyll a apoprotein A2"/>
    <property type="match status" value="1"/>
</dbReference>
<dbReference type="Gene3D" id="1.20.1130.10">
    <property type="entry name" value="Photosystem I PsaA/PsaB"/>
    <property type="match status" value="1"/>
</dbReference>
<dbReference type="HAMAP" id="MF_00458">
    <property type="entry name" value="PSI_PsaA"/>
    <property type="match status" value="1"/>
</dbReference>
<dbReference type="InterPro" id="IPR006243">
    <property type="entry name" value="PSI_PsaA"/>
</dbReference>
<dbReference type="InterPro" id="IPR001280">
    <property type="entry name" value="PSI_PsaA/B"/>
</dbReference>
<dbReference type="InterPro" id="IPR020586">
    <property type="entry name" value="PSI_PsaA/B_CS"/>
</dbReference>
<dbReference type="InterPro" id="IPR036408">
    <property type="entry name" value="PSI_PsaA/B_sf"/>
</dbReference>
<dbReference type="NCBIfam" id="TIGR01335">
    <property type="entry name" value="psaA"/>
    <property type="match status" value="1"/>
</dbReference>
<dbReference type="PANTHER" id="PTHR30128">
    <property type="entry name" value="OUTER MEMBRANE PROTEIN, OMPA-RELATED"/>
    <property type="match status" value="1"/>
</dbReference>
<dbReference type="PANTHER" id="PTHR30128:SF19">
    <property type="entry name" value="PHOTOSYSTEM I P700 CHLOROPHYLL A APOPROTEIN A1-RELATED"/>
    <property type="match status" value="1"/>
</dbReference>
<dbReference type="Pfam" id="PF00223">
    <property type="entry name" value="PsaA_PsaB"/>
    <property type="match status" value="1"/>
</dbReference>
<dbReference type="PIRSF" id="PIRSF002905">
    <property type="entry name" value="PSI_A"/>
    <property type="match status" value="1"/>
</dbReference>
<dbReference type="PRINTS" id="PR00257">
    <property type="entry name" value="PHOTSYSPSAAB"/>
</dbReference>
<dbReference type="SUPFAM" id="SSF81558">
    <property type="entry name" value="Photosystem I subunits PsaA/PsaB"/>
    <property type="match status" value="1"/>
</dbReference>
<dbReference type="PROSITE" id="PS00419">
    <property type="entry name" value="PHOTOSYSTEM_I_PSAAB"/>
    <property type="match status" value="1"/>
</dbReference>
<name>PSAA_ANGEV</name>
<gene>
    <name evidence="1" type="primary">psaA</name>
</gene>
<comment type="function">
    <text>PsaA and PsaB bind P700, the primary electron donor of photosystem I (PSI), as well as the electron acceptors A0, A1 and FX. PSI is a plastocyanin-ferredoxin oxidoreductase, converting photonic excitation into a charge separation, which transfers an electron from the donor P700 chlorophyll pair to the spectroscopically characterized acceptors A0, A1, FX, FA and FB in turn. Oxidized P700 is reduced on the lumenal side of the thylakoid membrane by plastocyanin.</text>
</comment>
<comment type="catalytic activity">
    <reaction evidence="1">
        <text>reduced [plastocyanin] + hnu + oxidized [2Fe-2S]-[ferredoxin] = oxidized [plastocyanin] + reduced [2Fe-2S]-[ferredoxin]</text>
        <dbReference type="Rhea" id="RHEA:30407"/>
        <dbReference type="Rhea" id="RHEA-COMP:10000"/>
        <dbReference type="Rhea" id="RHEA-COMP:10001"/>
        <dbReference type="Rhea" id="RHEA-COMP:10039"/>
        <dbReference type="Rhea" id="RHEA-COMP:10040"/>
        <dbReference type="ChEBI" id="CHEBI:29036"/>
        <dbReference type="ChEBI" id="CHEBI:30212"/>
        <dbReference type="ChEBI" id="CHEBI:33737"/>
        <dbReference type="ChEBI" id="CHEBI:33738"/>
        <dbReference type="ChEBI" id="CHEBI:49552"/>
        <dbReference type="EC" id="1.97.1.12"/>
    </reaction>
</comment>
<comment type="cofactor">
    <text evidence="1">P700 is a chlorophyll a/chlorophyll a' dimer, A0 is one or more chlorophyll a, A1 is one or both phylloquinones and FX is a shared 4Fe-4S iron-sulfur center.</text>
</comment>
<comment type="subunit">
    <text evidence="1">The PsaA/B heterodimer binds the P700 chlorophyll special pair and subsequent electron acceptors. PSI consists of a core antenna complex that captures photons, and an electron transfer chain that converts photonic excitation into a charge separation. The eukaryotic PSI reaction center is composed of at least 11 subunits.</text>
</comment>
<comment type="subcellular location">
    <subcellularLocation>
        <location evidence="1">Plastid</location>
        <location evidence="1">Chloroplast thylakoid membrane</location>
        <topology evidence="1">Multi-pass membrane protein</topology>
    </subcellularLocation>
</comment>
<comment type="similarity">
    <text evidence="1">Belongs to the PsaA/PsaB family.</text>
</comment>
<evidence type="ECO:0000255" key="1">
    <source>
        <dbReference type="HAMAP-Rule" id="MF_00458"/>
    </source>
</evidence>
<evidence type="ECO:0000305" key="2"/>
<sequence>MTIRSPEPEVKIVVERDPIKTSFEKWAQPGHFSRTLAKGPNTTTWIWNLHADAHDFDSHTNDLEDISRKVFSAHFGQLAIILIWLSGMYFHGARFSNYEAWLSDPTHIKPSAQVVWPIVGQEILNGDVGGGFQGIQITSGFFQLWRASGITNELQLYCTAIGALIFAGLMLFAGWFHYHKAAPKLARFQDVESMLNHHLAGLLGLGSLGWAGHQVHVSLPINQLLDAGVDPKEIPLPHEFILNRDLLAQLYPSFAKGLTPFFTSNWSEYADFLTFRGGLNPVTGGLWLTDTAHHHLAIGVLFLVAGHMYRTNWGIGHSIKEILEAHKGPFTGEGHKGLYEILTTSWHAQLALNLAMLGSLTIIVAHHMYSMPPYPYLATDYGTQLSLFTHHMWIGGFLVVGAAAHAAIFMVRDYDPTTQYNNLLDRVLRHRDAIISHLNWVCIFLGFHSFGLYIHNDTMSALGRPQDMFSDTAIQLQPIFAQWIQNTHAFAPSLTAPNATASTSLTWGGGDLIAVGGKVALLPIPLGTADFLVHHIHAFTIHVTVLILLKGVLFARSSRLIPDKANLGFRFPCDGPGRGGTCQVSAWDHVFLGLFWMYNSISIVIFHFSWKMQSDVWGSISDQGVVSHITGGNFAQSATTINGWLRDFLWAQASQVIQSYGSSLSAYGLLFLGAHFVWAFSLMFLFSGRGYWQELIESIVWAHNKLKVAPAIQPRALSIVQGRAVGVAHYLLGGIATTWAFFLARIISVG</sequence>
<protein>
    <recommendedName>
        <fullName evidence="1">Photosystem I P700 chlorophyll a apoprotein A1</fullName>
        <ecNumber evidence="1">1.97.1.12</ecNumber>
    </recommendedName>
    <alternativeName>
        <fullName evidence="1">PSI-A</fullName>
    </alternativeName>
    <alternativeName>
        <fullName evidence="1">PsaA</fullName>
    </alternativeName>
</protein>
<proteinExistence type="inferred from homology"/>